<evidence type="ECO:0000250" key="1">
    <source>
        <dbReference type="UniProtKB" id="P48237"/>
    </source>
</evidence>
<evidence type="ECO:0000255" key="2"/>
<evidence type="ECO:0000255" key="3">
    <source>
        <dbReference type="PROSITE-ProRule" id="PRU00708"/>
    </source>
</evidence>
<evidence type="ECO:0000305" key="4"/>
<proteinExistence type="inferred from homology"/>
<comment type="function">
    <text evidence="1">Regulates mitochondrial small subunit maturation by controlling 15S rRNA 5'-end processing. Localizes to the 5' precursor of the 15S rRNA in a position that is subsequently occupied by mS47 in the mature yeast mtSSU. Uses structure and sequence-specific RNA recognition, binding to a single-stranded region of the precursor and specifically recognizing bases -6 to -1. The exchange of Ccm1 for mS47 is coupled to the irreversible removal of precursor rRNA that is accompanied by conformational changes of the mitoribosomal proteins uS5m and mS26. These conformational changes signal completion of 5'-end rRNA processing through protection of the mature 5'-end of the 15S rRNA and stabilization of mS47. The removal of the 5' precursor together with the dissociation of Ccm1 may be catalyzed by the 5'-3' exoribonuclease Pet127. Involved in the specific removal of group I introns in mitochondrial encoded transcripts.</text>
</comment>
<comment type="subunit">
    <text evidence="1">Binds to mitochondrial small subunit 15S rRNA.</text>
</comment>
<comment type="subcellular location">
    <subcellularLocation>
        <location evidence="1">Mitochondrion</location>
    </subcellularLocation>
</comment>
<comment type="miscellaneous">
    <text evidence="1">Involved in mitochondrial-nuclear incompatibility, a major determinant in reproductive isolation between species, through hybrid incompatibility of Ccm1 and its interacting partner 15S rRNA between yeast species.</text>
</comment>
<comment type="similarity">
    <text evidence="4">Belongs to the CCM1 family.</text>
</comment>
<sequence length="677" mass="78480">MFTEICGKLRTCIYKKVAFSRPLGCNLRQLPVFRDFHNSVSCLRENDKALDELNATILRLQRRIDASKSISLQQKQTQEFPRNEKLLSFLLDNTLRSNVSDKETHSVPPKSKSVLPSEDNILVQRLGVPETSFNKYFQLEPTAESISHKSVLAPEVWKSRLDNLFRYSVPFEKCNLNQVIELVTHLPSSFRASYAKNILDCLKQVCLTPSVYLLNILLHASAKHSTLEETLNVYNAYNQFQLKPDNYTFVSLIIAYSLHKQIVKAFSLLSEMKRLKIEANTHVFNTYIAILYHERLYEQAWRLFDYMKFKSLQSQPDDKTYSYMISVCTAERKVEKALNLYQEMQERPINPLTPSSRTIDAILRALARYPRYHSKFWSIFEELRAEQWKPGAQTFVAFAQLFSYGGQVNSLKRWISRIWSMSGETPDAKTIELLFQYLFRAYSNVKFNQEPSLEQVPNEKTGDDASISSPSNQLSLKLPFLLSSSSGDITKEELIHEAKECYHYLQQYHPTVLSVHLRTTYMSIFKNHGCMDEVKEFYAKSFRPAKLPSSHVVSNQNETTCNKDLPFRDIHVYACAINGASVSNDFAFGYAVWLEYLHCKSYLPEVLNGDKIEFEITKSMIILFARNQFLHLAVKLLNETKDRHWKWTRRSLGIMHKVAFLSQDKPALDLIEEIVLD</sequence>
<reference key="1">
    <citation type="journal article" date="2011" name="Science">
        <title>Comparative functional genomics of the fission yeasts.</title>
        <authorList>
            <person name="Rhind N."/>
            <person name="Chen Z."/>
            <person name="Yassour M."/>
            <person name="Thompson D.A."/>
            <person name="Haas B.J."/>
            <person name="Habib N."/>
            <person name="Wapinski I."/>
            <person name="Roy S."/>
            <person name="Lin M.F."/>
            <person name="Heiman D.I."/>
            <person name="Young S.K."/>
            <person name="Furuya K."/>
            <person name="Guo Y."/>
            <person name="Pidoux A."/>
            <person name="Chen H.M."/>
            <person name="Robbertse B."/>
            <person name="Goldberg J.M."/>
            <person name="Aoki K."/>
            <person name="Bayne E.H."/>
            <person name="Berlin A.M."/>
            <person name="Desjardins C.A."/>
            <person name="Dobbs E."/>
            <person name="Dukaj L."/>
            <person name="Fan L."/>
            <person name="FitzGerald M.G."/>
            <person name="French C."/>
            <person name="Gujja S."/>
            <person name="Hansen K."/>
            <person name="Keifenheim D."/>
            <person name="Levin J.Z."/>
            <person name="Mosher R.A."/>
            <person name="Mueller C.A."/>
            <person name="Pfiffner J."/>
            <person name="Priest M."/>
            <person name="Russ C."/>
            <person name="Smialowska A."/>
            <person name="Swoboda P."/>
            <person name="Sykes S.M."/>
            <person name="Vaughn M."/>
            <person name="Vengrova S."/>
            <person name="Yoder R."/>
            <person name="Zeng Q."/>
            <person name="Allshire R."/>
            <person name="Baulcombe D."/>
            <person name="Birren B.W."/>
            <person name="Brown W."/>
            <person name="Ekwall K."/>
            <person name="Kellis M."/>
            <person name="Leatherwood J."/>
            <person name="Levin H."/>
            <person name="Margalit H."/>
            <person name="Martienssen R."/>
            <person name="Nieduszynski C.A."/>
            <person name="Spatafora J.W."/>
            <person name="Friedman N."/>
            <person name="Dalgaard J.Z."/>
            <person name="Baumann P."/>
            <person name="Niki H."/>
            <person name="Regev A."/>
            <person name="Nusbaum C."/>
        </authorList>
    </citation>
    <scope>NUCLEOTIDE SEQUENCE [LARGE SCALE GENOMIC DNA]</scope>
    <source>
        <strain>yFS275 / FY16936</strain>
    </source>
</reference>
<dbReference type="EMBL" id="KE651166">
    <property type="protein sequence ID" value="EEB07138.1"/>
    <property type="molecule type" value="Genomic_DNA"/>
</dbReference>
<dbReference type="RefSeq" id="XP_002173431.1">
    <property type="nucleotide sequence ID" value="XM_002173395.2"/>
</dbReference>
<dbReference type="SMR" id="B6K1V7"/>
<dbReference type="STRING" id="402676.B6K1V7"/>
<dbReference type="EnsemblFungi" id="EEB07138">
    <property type="protein sequence ID" value="EEB07138"/>
    <property type="gene ID" value="SJAG_02217"/>
</dbReference>
<dbReference type="GeneID" id="7050194"/>
<dbReference type="JaponicusDB" id="SJAG_02217">
    <property type="gene designation" value="ppr3"/>
</dbReference>
<dbReference type="VEuPathDB" id="FungiDB:SJAG_02217"/>
<dbReference type="eggNOG" id="ENOG502QUX2">
    <property type="taxonomic scope" value="Eukaryota"/>
</dbReference>
<dbReference type="HOGENOM" id="CLU_416844_0_0_1"/>
<dbReference type="OMA" id="WHELCYQ"/>
<dbReference type="OrthoDB" id="185373at2759"/>
<dbReference type="Proteomes" id="UP000001744">
    <property type="component" value="Unassembled WGS sequence"/>
</dbReference>
<dbReference type="GO" id="GO:0005739">
    <property type="term" value="C:mitochondrion"/>
    <property type="evidence" value="ECO:0007669"/>
    <property type="project" value="UniProtKB-SubCell"/>
</dbReference>
<dbReference type="GO" id="GO:0006397">
    <property type="term" value="P:mRNA processing"/>
    <property type="evidence" value="ECO:0007669"/>
    <property type="project" value="UniProtKB-KW"/>
</dbReference>
<dbReference type="GO" id="GO:0008380">
    <property type="term" value="P:RNA splicing"/>
    <property type="evidence" value="ECO:0007669"/>
    <property type="project" value="UniProtKB-KW"/>
</dbReference>
<dbReference type="Gene3D" id="1.25.40.10">
    <property type="entry name" value="Tetratricopeptide repeat domain"/>
    <property type="match status" value="2"/>
</dbReference>
<dbReference type="InterPro" id="IPR002885">
    <property type="entry name" value="Pentatricopeptide_rpt"/>
</dbReference>
<dbReference type="InterPro" id="IPR011990">
    <property type="entry name" value="TPR-like_helical_dom_sf"/>
</dbReference>
<dbReference type="NCBIfam" id="TIGR00756">
    <property type="entry name" value="PPR"/>
    <property type="match status" value="2"/>
</dbReference>
<dbReference type="PANTHER" id="PTHR47447">
    <property type="entry name" value="OS03G0856100 PROTEIN"/>
    <property type="match status" value="1"/>
</dbReference>
<dbReference type="PANTHER" id="PTHR47447:SF17">
    <property type="entry name" value="OS12G0638900 PROTEIN"/>
    <property type="match status" value="1"/>
</dbReference>
<dbReference type="Pfam" id="PF01535">
    <property type="entry name" value="PPR"/>
    <property type="match status" value="1"/>
</dbReference>
<dbReference type="Pfam" id="PF13041">
    <property type="entry name" value="PPR_2"/>
    <property type="match status" value="1"/>
</dbReference>
<dbReference type="PROSITE" id="PS51375">
    <property type="entry name" value="PPR"/>
    <property type="match status" value="6"/>
</dbReference>
<protein>
    <recommendedName>
        <fullName evidence="4">Mitochondrial 15S rRNA processing factor ppr3</fullName>
    </recommendedName>
    <alternativeName>
        <fullName>Pentatricopeptide repeat-containing protein 3</fullName>
    </alternativeName>
</protein>
<organism>
    <name type="scientific">Schizosaccharomyces japonicus (strain yFS275 / FY16936)</name>
    <name type="common">Fission yeast</name>
    <dbReference type="NCBI Taxonomy" id="402676"/>
    <lineage>
        <taxon>Eukaryota</taxon>
        <taxon>Fungi</taxon>
        <taxon>Dikarya</taxon>
        <taxon>Ascomycota</taxon>
        <taxon>Taphrinomycotina</taxon>
        <taxon>Schizosaccharomycetes</taxon>
        <taxon>Schizosaccharomycetales</taxon>
        <taxon>Schizosaccharomycetaceae</taxon>
        <taxon>Schizosaccharomyces</taxon>
    </lineage>
</organism>
<gene>
    <name type="primary">dmr1</name>
    <name type="ORF">SJAG_02217</name>
</gene>
<name>CCM1_SCHJY</name>
<keyword id="KW-0496">Mitochondrion</keyword>
<keyword id="KW-0507">mRNA processing</keyword>
<keyword id="KW-0508">mRNA splicing</keyword>
<keyword id="KW-1185">Reference proteome</keyword>
<keyword id="KW-0677">Repeat</keyword>
<keyword id="KW-0809">Transit peptide</keyword>
<feature type="transit peptide" description="Mitochondrion" evidence="2">
    <location>
        <begin position="1"/>
        <end position="43"/>
    </location>
</feature>
<feature type="chain" id="PRO_0000402268" description="Mitochondrial 15S rRNA processing factor ppr3" evidence="2">
    <location>
        <begin position="44"/>
        <end position="677"/>
    </location>
</feature>
<feature type="repeat" description="PPR 1" evidence="3">
    <location>
        <begin position="210"/>
        <end position="244"/>
    </location>
</feature>
<feature type="repeat" description="PPR 2" evidence="3">
    <location>
        <begin position="245"/>
        <end position="279"/>
    </location>
</feature>
<feature type="repeat" description="PPR 3" evidence="3">
    <location>
        <begin position="280"/>
        <end position="314"/>
    </location>
</feature>
<feature type="repeat" description="PPR 4" evidence="3">
    <location>
        <begin position="317"/>
        <end position="351"/>
    </location>
</feature>
<feature type="repeat" description="PPR 5" evidence="3">
    <location>
        <begin position="355"/>
        <end position="390"/>
    </location>
</feature>
<feature type="repeat" description="PPR 6" evidence="3">
    <location>
        <begin position="569"/>
        <end position="604"/>
    </location>
</feature>
<accession>B6K1V7</accession>